<proteinExistence type="inferred from homology"/>
<sequence>MSPRAIVLKEPNGVNLVPHEGIFDISPVAGWKPLLPTDQVFGIFVVFIVLLTLFLVYWIKLRKADPLRNHSSFVLLMQMLFVWAQDTTADLIGEENKKFTPYFLMLLLYLVSSNLIGLLGGISPPTSSLTFTFSLGLATFLGIVIMGIRYQRWSFFKSFTFNITIKGKKYSTLIPNPLSFLGEFAPLFSISLRLWGNILGGTLILALFYNFWFFAFSTLSNKPLALSLGAIFAGILTPALHVYFDVVVGTLQGYVFVMLTYNYWAKMRNIGLEESQEAAQRLQNLEVAKEIIN</sequence>
<evidence type="ECO:0000255" key="1">
    <source>
        <dbReference type="HAMAP-Rule" id="MF_01393"/>
    </source>
</evidence>
<gene>
    <name evidence="1" type="primary">atpB</name>
    <name type="ordered locus">MPN_604</name>
    <name type="ORF">MP238</name>
</gene>
<reference key="1">
    <citation type="journal article" date="1996" name="Nucleic Acids Res.">
        <title>Sequence analysis of 56 kb from the genome of the bacterium Mycoplasma pneumoniae comprising the dnaA region, the atp operon and a cluster of ribosomal protein genes.</title>
        <authorList>
            <person name="Hilbert H."/>
            <person name="Himmelreich R."/>
            <person name="Plagens H."/>
            <person name="Herrmann R."/>
        </authorList>
    </citation>
    <scope>NUCLEOTIDE SEQUENCE [GENOMIC DNA]</scope>
    <source>
        <strain>ATCC 29342 / M129 / Subtype 1</strain>
    </source>
</reference>
<reference key="2">
    <citation type="journal article" date="1996" name="Nucleic Acids Res.">
        <title>Complete sequence analysis of the genome of the bacterium Mycoplasma pneumoniae.</title>
        <authorList>
            <person name="Himmelreich R."/>
            <person name="Hilbert H."/>
            <person name="Plagens H."/>
            <person name="Pirkl E."/>
            <person name="Li B.-C."/>
            <person name="Herrmann R."/>
        </authorList>
    </citation>
    <scope>NUCLEOTIDE SEQUENCE [LARGE SCALE GENOMIC DNA]</scope>
    <source>
        <strain>ATCC 29342 / M129 / Subtype 1</strain>
    </source>
</reference>
<protein>
    <recommendedName>
        <fullName evidence="1">ATP synthase subunit a</fullName>
    </recommendedName>
    <alternativeName>
        <fullName evidence="1">ATP synthase F0 sector subunit a</fullName>
    </alternativeName>
    <alternativeName>
        <fullName evidence="1">F-ATPase subunit 6</fullName>
    </alternativeName>
</protein>
<comment type="function">
    <text evidence="1">Key component of the proton channel; it plays a direct role in the translocation of protons across the membrane.</text>
</comment>
<comment type="subunit">
    <text evidence="1">F-type ATPases have 2 components, CF(1) - the catalytic core - and CF(0) - the membrane proton channel. CF(1) has five subunits: alpha(3), beta(3), gamma(1), delta(1), epsilon(1). CF(0) has three main subunits: a(1), b(2) and c(9-12). The alpha and beta chains form an alternating ring which encloses part of the gamma chain. CF(1) is attached to CF(0) by a central stalk formed by the gamma and epsilon chains, while a peripheral stalk is formed by the delta and b chains.</text>
</comment>
<comment type="subcellular location">
    <subcellularLocation>
        <location evidence="1">Cell membrane</location>
        <topology evidence="1">Multi-pass membrane protein</topology>
    </subcellularLocation>
</comment>
<comment type="similarity">
    <text evidence="1">Belongs to the ATPase A chain family.</text>
</comment>
<organism>
    <name type="scientific">Mycoplasma pneumoniae (strain ATCC 29342 / M129 / Subtype 1)</name>
    <name type="common">Mycoplasmoides pneumoniae</name>
    <dbReference type="NCBI Taxonomy" id="272634"/>
    <lineage>
        <taxon>Bacteria</taxon>
        <taxon>Bacillati</taxon>
        <taxon>Mycoplasmatota</taxon>
        <taxon>Mycoplasmoidales</taxon>
        <taxon>Mycoplasmoidaceae</taxon>
        <taxon>Mycoplasmoides</taxon>
    </lineage>
</organism>
<feature type="chain" id="PRO_0000082062" description="ATP synthase subunit a">
    <location>
        <begin position="1"/>
        <end position="293"/>
    </location>
</feature>
<feature type="transmembrane region" description="Helical" evidence="1">
    <location>
        <begin position="39"/>
        <end position="59"/>
    </location>
</feature>
<feature type="transmembrane region" description="Helical" evidence="1">
    <location>
        <begin position="73"/>
        <end position="93"/>
    </location>
</feature>
<feature type="transmembrane region" description="Helical" evidence="1">
    <location>
        <begin position="102"/>
        <end position="122"/>
    </location>
</feature>
<feature type="transmembrane region" description="Helical" evidence="1">
    <location>
        <begin position="128"/>
        <end position="148"/>
    </location>
</feature>
<feature type="transmembrane region" description="Helical" evidence="1">
    <location>
        <begin position="172"/>
        <end position="192"/>
    </location>
</feature>
<feature type="transmembrane region" description="Helical" evidence="1">
    <location>
        <begin position="198"/>
        <end position="218"/>
    </location>
</feature>
<feature type="transmembrane region" description="Helical" evidence="1">
    <location>
        <begin position="224"/>
        <end position="244"/>
    </location>
</feature>
<feature type="transmembrane region" description="Helical" evidence="1">
    <location>
        <begin position="245"/>
        <end position="265"/>
    </location>
</feature>
<name>ATP6_MYCPN</name>
<accession>Q50326</accession>
<dbReference type="EMBL" id="U43738">
    <property type="protein sequence ID" value="AAC43653.1"/>
    <property type="molecule type" value="Genomic_DNA"/>
</dbReference>
<dbReference type="EMBL" id="U00089">
    <property type="protein sequence ID" value="AAB95886.1"/>
    <property type="molecule type" value="Genomic_DNA"/>
</dbReference>
<dbReference type="PIR" id="S62843">
    <property type="entry name" value="S62843"/>
</dbReference>
<dbReference type="RefSeq" id="NP_110293.1">
    <property type="nucleotide sequence ID" value="NC_000912.1"/>
</dbReference>
<dbReference type="RefSeq" id="WP_010874961.1">
    <property type="nucleotide sequence ID" value="NZ_OU342337.1"/>
</dbReference>
<dbReference type="SMR" id="Q50326"/>
<dbReference type="STRING" id="272634.MPN_604"/>
<dbReference type="EnsemblBacteria" id="AAB95886">
    <property type="protein sequence ID" value="AAB95886"/>
    <property type="gene ID" value="MPN_604"/>
</dbReference>
<dbReference type="KEGG" id="mpn:MPN_604"/>
<dbReference type="PATRIC" id="fig|272634.6.peg.667"/>
<dbReference type="HOGENOM" id="CLU_041018_3_0_14"/>
<dbReference type="OrthoDB" id="9789241at2"/>
<dbReference type="BioCyc" id="MetaCyc:MONOMER-535"/>
<dbReference type="BioCyc" id="MPNE272634:G1GJ3-979-MONOMER"/>
<dbReference type="Proteomes" id="UP000000808">
    <property type="component" value="Chromosome"/>
</dbReference>
<dbReference type="GO" id="GO:0005886">
    <property type="term" value="C:plasma membrane"/>
    <property type="evidence" value="ECO:0007669"/>
    <property type="project" value="UniProtKB-SubCell"/>
</dbReference>
<dbReference type="GO" id="GO:0045259">
    <property type="term" value="C:proton-transporting ATP synthase complex"/>
    <property type="evidence" value="ECO:0007669"/>
    <property type="project" value="UniProtKB-KW"/>
</dbReference>
<dbReference type="GO" id="GO:0046933">
    <property type="term" value="F:proton-transporting ATP synthase activity, rotational mechanism"/>
    <property type="evidence" value="ECO:0007669"/>
    <property type="project" value="UniProtKB-UniRule"/>
</dbReference>
<dbReference type="GO" id="GO:0042777">
    <property type="term" value="P:proton motive force-driven plasma membrane ATP synthesis"/>
    <property type="evidence" value="ECO:0007669"/>
    <property type="project" value="TreeGrafter"/>
</dbReference>
<dbReference type="CDD" id="cd00310">
    <property type="entry name" value="ATP-synt_Fo_a_6"/>
    <property type="match status" value="1"/>
</dbReference>
<dbReference type="Gene3D" id="1.20.120.220">
    <property type="entry name" value="ATP synthase, F0 complex, subunit A"/>
    <property type="match status" value="1"/>
</dbReference>
<dbReference type="HAMAP" id="MF_01393">
    <property type="entry name" value="ATP_synth_a_bact"/>
    <property type="match status" value="1"/>
</dbReference>
<dbReference type="InterPro" id="IPR045082">
    <property type="entry name" value="ATP_syn_F0_a_bact/chloroplast"/>
</dbReference>
<dbReference type="InterPro" id="IPR000568">
    <property type="entry name" value="ATP_synth_F0_asu"/>
</dbReference>
<dbReference type="InterPro" id="IPR023011">
    <property type="entry name" value="ATP_synth_F0_asu_AS"/>
</dbReference>
<dbReference type="InterPro" id="IPR035908">
    <property type="entry name" value="F0_ATP_A_sf"/>
</dbReference>
<dbReference type="NCBIfam" id="NF004485">
    <property type="entry name" value="PRK05815.3-3"/>
    <property type="match status" value="1"/>
</dbReference>
<dbReference type="PANTHER" id="PTHR42823">
    <property type="entry name" value="ATP SYNTHASE SUBUNIT A, CHLOROPLASTIC"/>
    <property type="match status" value="1"/>
</dbReference>
<dbReference type="PANTHER" id="PTHR42823:SF3">
    <property type="entry name" value="ATP SYNTHASE SUBUNIT A, CHLOROPLASTIC"/>
    <property type="match status" value="1"/>
</dbReference>
<dbReference type="Pfam" id="PF00119">
    <property type="entry name" value="ATP-synt_A"/>
    <property type="match status" value="1"/>
</dbReference>
<dbReference type="PRINTS" id="PR00123">
    <property type="entry name" value="ATPASEA"/>
</dbReference>
<dbReference type="SUPFAM" id="SSF81336">
    <property type="entry name" value="F1F0 ATP synthase subunit A"/>
    <property type="match status" value="1"/>
</dbReference>
<dbReference type="PROSITE" id="PS00449">
    <property type="entry name" value="ATPASE_A"/>
    <property type="match status" value="1"/>
</dbReference>
<keyword id="KW-0066">ATP synthesis</keyword>
<keyword id="KW-1003">Cell membrane</keyword>
<keyword id="KW-0138">CF(0)</keyword>
<keyword id="KW-0375">Hydrogen ion transport</keyword>
<keyword id="KW-0406">Ion transport</keyword>
<keyword id="KW-0472">Membrane</keyword>
<keyword id="KW-1185">Reference proteome</keyword>
<keyword id="KW-0812">Transmembrane</keyword>
<keyword id="KW-1133">Transmembrane helix</keyword>
<keyword id="KW-0813">Transport</keyword>